<feature type="propeptide" id="PRO_0000442663" evidence="5">
    <location>
        <begin position="1"/>
        <end status="unknown"/>
    </location>
</feature>
<feature type="chain" id="PRO_0000028920" description="Zinc metalloproteinase nas-16">
    <location>
        <begin status="unknown"/>
        <end position="451"/>
    </location>
</feature>
<feature type="domain" description="Peptidase M12A" evidence="4">
    <location>
        <begin position="70"/>
        <end position="273"/>
    </location>
</feature>
<feature type="domain" description="EGF-like">
    <location>
        <begin position="267"/>
        <end position="306"/>
    </location>
</feature>
<feature type="active site" evidence="4">
    <location>
        <position position="176"/>
    </location>
</feature>
<feature type="binding site" evidence="4">
    <location>
        <position position="175"/>
    </location>
    <ligand>
        <name>Zn(2+)</name>
        <dbReference type="ChEBI" id="CHEBI:29105"/>
        <note>catalytic</note>
    </ligand>
</feature>
<feature type="binding site" evidence="4">
    <location>
        <position position="179"/>
    </location>
    <ligand>
        <name>Zn(2+)</name>
        <dbReference type="ChEBI" id="CHEBI:29105"/>
        <note>catalytic</note>
    </ligand>
</feature>
<feature type="binding site" evidence="4">
    <location>
        <position position="185"/>
    </location>
    <ligand>
        <name>Zn(2+)</name>
        <dbReference type="ChEBI" id="CHEBI:29105"/>
        <note>catalytic</note>
    </ligand>
</feature>
<feature type="glycosylation site" description="N-linked (GlcNAc...) asparagine" evidence="3">
    <location>
        <position position="133"/>
    </location>
</feature>
<feature type="glycosylation site" description="N-linked (GlcNAc...) asparagine" evidence="3">
    <location>
        <position position="363"/>
    </location>
</feature>
<feature type="glycosylation site" description="N-linked (GlcNAc...) asparagine" evidence="3">
    <location>
        <position position="438"/>
    </location>
</feature>
<feature type="disulfide bond" evidence="4">
    <location>
        <begin position="127"/>
        <end position="272"/>
    </location>
</feature>
<feature type="disulfide bond" evidence="4">
    <location>
        <begin position="148"/>
        <end position="167"/>
    </location>
</feature>
<feature type="disulfide bond" evidence="1">
    <location>
        <begin position="274"/>
        <end position="291"/>
    </location>
</feature>
<feature type="disulfide bond" evidence="1">
    <location>
        <begin position="296"/>
        <end position="305"/>
    </location>
</feature>
<comment type="function">
    <text evidence="2">Metalloprotease.</text>
</comment>
<comment type="cofactor">
    <cofactor evidence="4">
        <name>Zn(2+)</name>
        <dbReference type="ChEBI" id="CHEBI:29105"/>
    </cofactor>
    <text evidence="4">Binds 1 zinc ion per subunit.</text>
</comment>
<comment type="subcellular location">
    <subcellularLocation>
        <location evidence="5">Secreted</location>
    </subcellularLocation>
</comment>
<evidence type="ECO:0000250" key="1"/>
<evidence type="ECO:0000250" key="2">
    <source>
        <dbReference type="UniProtKB" id="A8Q2D1"/>
    </source>
</evidence>
<evidence type="ECO:0000255" key="3"/>
<evidence type="ECO:0000255" key="4">
    <source>
        <dbReference type="PROSITE-ProRule" id="PRU01211"/>
    </source>
</evidence>
<evidence type="ECO:0000305" key="5"/>
<keyword id="KW-1015">Disulfide bond</keyword>
<keyword id="KW-0245">EGF-like domain</keyword>
<keyword id="KW-0325">Glycoprotein</keyword>
<keyword id="KW-0378">Hydrolase</keyword>
<keyword id="KW-0479">Metal-binding</keyword>
<keyword id="KW-0482">Metalloprotease</keyword>
<keyword id="KW-0645">Protease</keyword>
<keyword id="KW-1185">Reference proteome</keyword>
<keyword id="KW-0964">Secreted</keyword>
<keyword id="KW-0862">Zinc</keyword>
<keyword id="KW-0865">Zymogen</keyword>
<protein>
    <recommendedName>
        <fullName>Zinc metalloproteinase nas-16</fullName>
        <ecNumber evidence="2">3.4.24.-</ecNumber>
    </recommendedName>
    <alternativeName>
        <fullName>Nematode astacin 16</fullName>
    </alternativeName>
</protein>
<sequence>MGNLFKFSLNCIKYRSENLEKSKMFYQYFYFHLTLSIVLIYGSDIGKDANEHMSSVPKKIIIEGTRQKRQVVTKLFSPQWSNAKVFYCNADSFSKLQLKKLKLKKNSDTVKRKLMKFAMNFISSQTCVTFEENCTISTRIKFVDSTFCASYVGMINSVQEIYFPDWCMRFGSAVHELMHALGVLHTHARFDRDNFLNVNLNKDDEDDSNFEIVSPPFSINVVPYEYGSTLHYTADVSGTNSLLPKQMEYYRTLGNRRVTFYDMLTINTAYNCKCPSELLCANGGYTNPSNCLECICPLGYGGVLCDRVVACSVQLSADSYWKGSWISVGSSVLRDTTDPVKAFISINAPKDKIIEVKIVKIENFSCDSGCNNNGVEIKYMGDPRITNPIICCENQVDPSNKGYKAKLNPLLINIYTFLGKNKVTFHYRYVNERLSSYNKTTNGYDNYEYYA</sequence>
<reference key="1">
    <citation type="journal article" date="1998" name="Science">
        <title>Genome sequence of the nematode C. elegans: a platform for investigating biology.</title>
        <authorList>
            <consortium name="The C. elegans sequencing consortium"/>
        </authorList>
    </citation>
    <scope>NUCLEOTIDE SEQUENCE [LARGE SCALE GENOMIC DNA]</scope>
    <source>
        <strain>Bristol N2</strain>
    </source>
</reference>
<reference key="2">
    <citation type="journal article" date="2003" name="Eur. J. Biochem.">
        <title>The astacin protein family in Caenorhabditis elegans.</title>
        <authorList>
            <person name="Moehrlen F."/>
            <person name="Hutter H."/>
            <person name="Zwilling R."/>
        </authorList>
    </citation>
    <scope>IDENTIFICATION</scope>
    <scope>NOMENCLATURE</scope>
</reference>
<accession>Q21180</accession>
<gene>
    <name type="primary">nas-16</name>
    <name type="ORF">K03B8.1</name>
</gene>
<organism>
    <name type="scientific">Caenorhabditis elegans</name>
    <dbReference type="NCBI Taxonomy" id="6239"/>
    <lineage>
        <taxon>Eukaryota</taxon>
        <taxon>Metazoa</taxon>
        <taxon>Ecdysozoa</taxon>
        <taxon>Nematoda</taxon>
        <taxon>Chromadorea</taxon>
        <taxon>Rhabditida</taxon>
        <taxon>Rhabditina</taxon>
        <taxon>Rhabditomorpha</taxon>
        <taxon>Rhabditoidea</taxon>
        <taxon>Rhabditidae</taxon>
        <taxon>Peloderinae</taxon>
        <taxon>Caenorhabditis</taxon>
    </lineage>
</organism>
<proteinExistence type="inferred from homology"/>
<name>NAS16_CAEEL</name>
<dbReference type="EC" id="3.4.24.-" evidence="2"/>
<dbReference type="EMBL" id="Z74039">
    <property type="protein sequence ID" value="CAA98503.1"/>
    <property type="molecule type" value="Genomic_DNA"/>
</dbReference>
<dbReference type="PIR" id="T23265">
    <property type="entry name" value="T23265"/>
</dbReference>
<dbReference type="RefSeq" id="NP_505889.2">
    <property type="nucleotide sequence ID" value="NM_073488.2"/>
</dbReference>
<dbReference type="SMR" id="Q21180"/>
<dbReference type="BioGRID" id="51634">
    <property type="interactions" value="3"/>
</dbReference>
<dbReference type="STRING" id="6239.K03B8.1.1"/>
<dbReference type="MEROPS" id="M12.A30"/>
<dbReference type="GlyCosmos" id="Q21180">
    <property type="glycosylation" value="3 sites, No reported glycans"/>
</dbReference>
<dbReference type="PaxDb" id="6239-K03B8.1"/>
<dbReference type="EnsemblMetazoa" id="K03B8.1.1">
    <property type="protein sequence ID" value="K03B8.1.1"/>
    <property type="gene ID" value="WBGene00003535"/>
</dbReference>
<dbReference type="GeneID" id="186922"/>
<dbReference type="KEGG" id="cel:CELE_K03B8.1"/>
<dbReference type="UCSC" id="K03B8.1">
    <property type="organism name" value="c. elegans"/>
</dbReference>
<dbReference type="AGR" id="WB:WBGene00003535"/>
<dbReference type="CTD" id="186922"/>
<dbReference type="WormBase" id="K03B8.1">
    <property type="protein sequence ID" value="CE51407"/>
    <property type="gene ID" value="WBGene00003535"/>
    <property type="gene designation" value="nas-16"/>
</dbReference>
<dbReference type="eggNOG" id="KOG3714">
    <property type="taxonomic scope" value="Eukaryota"/>
</dbReference>
<dbReference type="GeneTree" id="ENSGT00970000196148"/>
<dbReference type="HOGENOM" id="CLU_017286_1_1_1"/>
<dbReference type="InParanoid" id="Q21180"/>
<dbReference type="OMA" id="NCTISTR"/>
<dbReference type="OrthoDB" id="5806856at2759"/>
<dbReference type="PhylomeDB" id="Q21180"/>
<dbReference type="PRO" id="PR:Q21180"/>
<dbReference type="Proteomes" id="UP000001940">
    <property type="component" value="Chromosome V"/>
</dbReference>
<dbReference type="GO" id="GO:0005576">
    <property type="term" value="C:extracellular region"/>
    <property type="evidence" value="ECO:0007669"/>
    <property type="project" value="UniProtKB-SubCell"/>
</dbReference>
<dbReference type="GO" id="GO:0004222">
    <property type="term" value="F:metalloendopeptidase activity"/>
    <property type="evidence" value="ECO:0000318"/>
    <property type="project" value="GO_Central"/>
</dbReference>
<dbReference type="GO" id="GO:0008270">
    <property type="term" value="F:zinc ion binding"/>
    <property type="evidence" value="ECO:0007669"/>
    <property type="project" value="InterPro"/>
</dbReference>
<dbReference type="GO" id="GO:0018996">
    <property type="term" value="P:molting cycle, collagen and cuticulin-based cuticle"/>
    <property type="evidence" value="ECO:0007669"/>
    <property type="project" value="InterPro"/>
</dbReference>
<dbReference type="GO" id="GO:0006508">
    <property type="term" value="P:proteolysis"/>
    <property type="evidence" value="ECO:0007669"/>
    <property type="project" value="UniProtKB-KW"/>
</dbReference>
<dbReference type="FunFam" id="3.40.390.10:FF:000105">
    <property type="entry name" value="Zinc metalloproteinase nas-16"/>
    <property type="match status" value="1"/>
</dbReference>
<dbReference type="Gene3D" id="3.40.390.10">
    <property type="entry name" value="Collagenase (Catalytic Domain)"/>
    <property type="match status" value="1"/>
</dbReference>
<dbReference type="InterPro" id="IPR024079">
    <property type="entry name" value="MetalloPept_cat_dom_sf"/>
</dbReference>
<dbReference type="InterPro" id="IPR017050">
    <property type="entry name" value="Metallopeptidase_nem"/>
</dbReference>
<dbReference type="InterPro" id="IPR001506">
    <property type="entry name" value="Peptidase_M12A"/>
</dbReference>
<dbReference type="InterPro" id="IPR006026">
    <property type="entry name" value="Peptidase_Metallo"/>
</dbReference>
<dbReference type="PANTHER" id="PTHR10127">
    <property type="entry name" value="DISCOIDIN, CUB, EGF, LAMININ , AND ZINC METALLOPROTEASE DOMAIN CONTAINING"/>
    <property type="match status" value="1"/>
</dbReference>
<dbReference type="PANTHER" id="PTHR10127:SF885">
    <property type="entry name" value="ZINC METALLOPROTEINASE NAS-16-RELATED"/>
    <property type="match status" value="1"/>
</dbReference>
<dbReference type="Pfam" id="PF01400">
    <property type="entry name" value="Astacin"/>
    <property type="match status" value="1"/>
</dbReference>
<dbReference type="PIRSF" id="PIRSF036365">
    <property type="entry name" value="Astacin_nematoda"/>
    <property type="match status" value="1"/>
</dbReference>
<dbReference type="PRINTS" id="PR00480">
    <property type="entry name" value="ASTACIN"/>
</dbReference>
<dbReference type="SMART" id="SM00235">
    <property type="entry name" value="ZnMc"/>
    <property type="match status" value="1"/>
</dbReference>
<dbReference type="SUPFAM" id="SSF55486">
    <property type="entry name" value="Metalloproteases ('zincins'), catalytic domain"/>
    <property type="match status" value="1"/>
</dbReference>
<dbReference type="PROSITE" id="PS51864">
    <property type="entry name" value="ASTACIN"/>
    <property type="match status" value="1"/>
</dbReference>
<dbReference type="PROSITE" id="PS00022">
    <property type="entry name" value="EGF_1"/>
    <property type="match status" value="1"/>
</dbReference>
<dbReference type="PROSITE" id="PS01186">
    <property type="entry name" value="EGF_2"/>
    <property type="match status" value="1"/>
</dbReference>
<dbReference type="PROSITE" id="PS00142">
    <property type="entry name" value="ZINC_PROTEASE"/>
    <property type="match status" value="1"/>
</dbReference>